<organism>
    <name type="scientific">Mycobacterium tuberculosis (strain CDC 1551 / Oshkosh)</name>
    <dbReference type="NCBI Taxonomy" id="83331"/>
    <lineage>
        <taxon>Bacteria</taxon>
        <taxon>Bacillati</taxon>
        <taxon>Actinomycetota</taxon>
        <taxon>Actinomycetes</taxon>
        <taxon>Mycobacteriales</taxon>
        <taxon>Mycobacteriaceae</taxon>
        <taxon>Mycobacterium</taxon>
        <taxon>Mycobacterium tuberculosis complex</taxon>
    </lineage>
</organism>
<feature type="chain" id="PRO_0000428576" description="Ribonuclease VapC14">
    <location>
        <begin position="1"/>
        <end position="103"/>
    </location>
</feature>
<feature type="domain" description="PINc">
    <location>
        <begin position="3"/>
        <end position="74"/>
    </location>
</feature>
<feature type="binding site" evidence="2">
    <location>
        <position position="6"/>
    </location>
    <ligand>
        <name>Mg(2+)</name>
        <dbReference type="ChEBI" id="CHEBI:18420"/>
    </ligand>
</feature>
<protein>
    <recommendedName>
        <fullName>Ribonuclease VapC14</fullName>
        <shortName>RNase VapC14</shortName>
        <ecNumber>3.1.-.-</ecNumber>
    </recommendedName>
    <alternativeName>
        <fullName>Toxin VapC14</fullName>
    </alternativeName>
</protein>
<reference key="1">
    <citation type="journal article" date="2002" name="J. Bacteriol.">
        <title>Whole-genome comparison of Mycobacterium tuberculosis clinical and laboratory strains.</title>
        <authorList>
            <person name="Fleischmann R.D."/>
            <person name="Alland D."/>
            <person name="Eisen J.A."/>
            <person name="Carpenter L."/>
            <person name="White O."/>
            <person name="Peterson J.D."/>
            <person name="DeBoy R.T."/>
            <person name="Dodson R.J."/>
            <person name="Gwinn M.L."/>
            <person name="Haft D.H."/>
            <person name="Hickey E.K."/>
            <person name="Kolonay J.F."/>
            <person name="Nelson W.C."/>
            <person name="Umayam L.A."/>
            <person name="Ermolaeva M.D."/>
            <person name="Salzberg S.L."/>
            <person name="Delcher A."/>
            <person name="Utterback T.R."/>
            <person name="Weidman J.F."/>
            <person name="Khouri H.M."/>
            <person name="Gill J."/>
            <person name="Mikula A."/>
            <person name="Bishai W."/>
            <person name="Jacobs W.R. Jr."/>
            <person name="Venter J.C."/>
            <person name="Fraser C.M."/>
        </authorList>
    </citation>
    <scope>NUCLEOTIDE SEQUENCE [LARGE SCALE GENOMIC DNA]</scope>
    <source>
        <strain>CDC 1551 / Oshkosh</strain>
    </source>
</reference>
<dbReference type="EC" id="3.1.-.-"/>
<dbReference type="EMBL" id="AE000516">
    <property type="protein sequence ID" value="AAK46275.1"/>
    <property type="molecule type" value="Genomic_DNA"/>
</dbReference>
<dbReference type="PIR" id="E70638">
    <property type="entry name" value="E70638"/>
</dbReference>
<dbReference type="RefSeq" id="WP_003409881.1">
    <property type="nucleotide sequence ID" value="NZ_KK341227.1"/>
</dbReference>
<dbReference type="SMR" id="P9WF98"/>
<dbReference type="KEGG" id="mtc:MT2003"/>
<dbReference type="PATRIC" id="fig|83331.31.peg.2158"/>
<dbReference type="HOGENOM" id="CLU_178458_0_0_11"/>
<dbReference type="Proteomes" id="UP000001020">
    <property type="component" value="Chromosome"/>
</dbReference>
<dbReference type="GO" id="GO:0046872">
    <property type="term" value="F:metal ion binding"/>
    <property type="evidence" value="ECO:0007669"/>
    <property type="project" value="UniProtKB-KW"/>
</dbReference>
<dbReference type="GO" id="GO:0004518">
    <property type="term" value="F:nuclease activity"/>
    <property type="evidence" value="ECO:0007669"/>
    <property type="project" value="UniProtKB-KW"/>
</dbReference>
<dbReference type="Gene3D" id="3.40.50.1010">
    <property type="entry name" value="5'-nuclease"/>
    <property type="match status" value="1"/>
</dbReference>
<dbReference type="InterPro" id="IPR029060">
    <property type="entry name" value="PIN-like_dom_sf"/>
</dbReference>
<dbReference type="InterPro" id="IPR050556">
    <property type="entry name" value="Type_II_TA_system_RNase"/>
</dbReference>
<dbReference type="PANTHER" id="PTHR33653">
    <property type="entry name" value="RIBONUCLEASE VAPC2"/>
    <property type="match status" value="1"/>
</dbReference>
<dbReference type="PANTHER" id="PTHR33653:SF1">
    <property type="entry name" value="RIBONUCLEASE VAPC2"/>
    <property type="match status" value="1"/>
</dbReference>
<dbReference type="SUPFAM" id="SSF88723">
    <property type="entry name" value="PIN domain-like"/>
    <property type="match status" value="1"/>
</dbReference>
<evidence type="ECO:0000250" key="1"/>
<evidence type="ECO:0000255" key="2"/>
<evidence type="ECO:0000305" key="3"/>
<keyword id="KW-0378">Hydrolase</keyword>
<keyword id="KW-0460">Magnesium</keyword>
<keyword id="KW-0479">Metal-binding</keyword>
<keyword id="KW-0540">Nuclease</keyword>
<keyword id="KW-1185">Reference proteome</keyword>
<keyword id="KW-1277">Toxin-antitoxin system</keyword>
<proteinExistence type="inferred from homology"/>
<gene>
    <name type="primary">vapC14</name>
    <name type="ordered locus">MT2003</name>
</gene>
<comment type="function">
    <text evidence="1">Toxic component of a type II toxin-antitoxin (TA) system. An RNase. The cognate antitoxin is VapB14 (By similarity).</text>
</comment>
<comment type="cofactor">
    <cofactor evidence="3">
        <name>Mg(2+)</name>
        <dbReference type="ChEBI" id="CHEBI:18420"/>
    </cofactor>
</comment>
<comment type="similarity">
    <text evidence="3">Belongs to the PINc/VapC protein family.</text>
</comment>
<accession>P9WF98</accession>
<accession>L0TAW9</accession>
<accession>P95261</accession>
<accession>Q7D7Q0</accession>
<sequence length="103" mass="11628">MTYVLDTNVVSALRVPGRHPAVAAWADSVQVAEQFVVAITLAEIERGVIAKERTDPTQSEHLRRWFDDKVLRIFVFARRGTNLIMQPLAGHIGYSLYSGISWF</sequence>
<name>VPC14_MYCTO</name>